<reference key="1">
    <citation type="journal article" date="1996" name="J. Bacteriol.">
        <title>Secondary transporters for citrate and the Mg(2+)-citrate complex in Bacillus subtilis are homologous proteins.</title>
        <authorList>
            <person name="Boorsma A."/>
            <person name="van der Rest M.E."/>
            <person name="Lolkema J.S."/>
            <person name="Konings W.N."/>
        </authorList>
    </citation>
    <scope>NUCLEOTIDE SEQUENCE [GENOMIC DNA]</scope>
    <source>
        <strain>168 / 6GM</strain>
    </source>
</reference>
<reference key="2">
    <citation type="journal article" date="1997" name="Gene">
        <title>Cloning and sequencing of a 35.7 kb in the 70 degree-73 degree region of the Bacillus subtilis genome reveal genes for a new two-component system, three spore germination proteins, an iron uptake system and a general stress response protein.</title>
        <authorList>
            <person name="Yamamoto H."/>
            <person name="Uchiyama S."/>
            <person name="Nugroho F.A."/>
            <person name="Sekiguchi J."/>
        </authorList>
    </citation>
    <scope>NUCLEOTIDE SEQUENCE [GENOMIC DNA]</scope>
    <source>
        <strain>168 / AC327</strain>
    </source>
</reference>
<reference key="3">
    <citation type="journal article" date="1997" name="Nature">
        <title>The complete genome sequence of the Gram-positive bacterium Bacillus subtilis.</title>
        <authorList>
            <person name="Kunst F."/>
            <person name="Ogasawara N."/>
            <person name="Moszer I."/>
            <person name="Albertini A.M."/>
            <person name="Alloni G."/>
            <person name="Azevedo V."/>
            <person name="Bertero M.G."/>
            <person name="Bessieres P."/>
            <person name="Bolotin A."/>
            <person name="Borchert S."/>
            <person name="Borriss R."/>
            <person name="Boursier L."/>
            <person name="Brans A."/>
            <person name="Braun M."/>
            <person name="Brignell S.C."/>
            <person name="Bron S."/>
            <person name="Brouillet S."/>
            <person name="Bruschi C.V."/>
            <person name="Caldwell B."/>
            <person name="Capuano V."/>
            <person name="Carter N.M."/>
            <person name="Choi S.-K."/>
            <person name="Codani J.-J."/>
            <person name="Connerton I.F."/>
            <person name="Cummings N.J."/>
            <person name="Daniel R.A."/>
            <person name="Denizot F."/>
            <person name="Devine K.M."/>
            <person name="Duesterhoeft A."/>
            <person name="Ehrlich S.D."/>
            <person name="Emmerson P.T."/>
            <person name="Entian K.-D."/>
            <person name="Errington J."/>
            <person name="Fabret C."/>
            <person name="Ferrari E."/>
            <person name="Foulger D."/>
            <person name="Fritz C."/>
            <person name="Fujita M."/>
            <person name="Fujita Y."/>
            <person name="Fuma S."/>
            <person name="Galizzi A."/>
            <person name="Galleron N."/>
            <person name="Ghim S.-Y."/>
            <person name="Glaser P."/>
            <person name="Goffeau A."/>
            <person name="Golightly E.J."/>
            <person name="Grandi G."/>
            <person name="Guiseppi G."/>
            <person name="Guy B.J."/>
            <person name="Haga K."/>
            <person name="Haiech J."/>
            <person name="Harwood C.R."/>
            <person name="Henaut A."/>
            <person name="Hilbert H."/>
            <person name="Holsappel S."/>
            <person name="Hosono S."/>
            <person name="Hullo M.-F."/>
            <person name="Itaya M."/>
            <person name="Jones L.-M."/>
            <person name="Joris B."/>
            <person name="Karamata D."/>
            <person name="Kasahara Y."/>
            <person name="Klaerr-Blanchard M."/>
            <person name="Klein C."/>
            <person name="Kobayashi Y."/>
            <person name="Koetter P."/>
            <person name="Koningstein G."/>
            <person name="Krogh S."/>
            <person name="Kumano M."/>
            <person name="Kurita K."/>
            <person name="Lapidus A."/>
            <person name="Lardinois S."/>
            <person name="Lauber J."/>
            <person name="Lazarevic V."/>
            <person name="Lee S.-M."/>
            <person name="Levine A."/>
            <person name="Liu H."/>
            <person name="Masuda S."/>
            <person name="Mauel C."/>
            <person name="Medigue C."/>
            <person name="Medina N."/>
            <person name="Mellado R.P."/>
            <person name="Mizuno M."/>
            <person name="Moestl D."/>
            <person name="Nakai S."/>
            <person name="Noback M."/>
            <person name="Noone D."/>
            <person name="O'Reilly M."/>
            <person name="Ogawa K."/>
            <person name="Ogiwara A."/>
            <person name="Oudega B."/>
            <person name="Park S.-H."/>
            <person name="Parro V."/>
            <person name="Pohl T.M."/>
            <person name="Portetelle D."/>
            <person name="Porwollik S."/>
            <person name="Prescott A.M."/>
            <person name="Presecan E."/>
            <person name="Pujic P."/>
            <person name="Purnelle B."/>
            <person name="Rapoport G."/>
            <person name="Rey M."/>
            <person name="Reynolds S."/>
            <person name="Rieger M."/>
            <person name="Rivolta C."/>
            <person name="Rocha E."/>
            <person name="Roche B."/>
            <person name="Rose M."/>
            <person name="Sadaie Y."/>
            <person name="Sato T."/>
            <person name="Scanlan E."/>
            <person name="Schleich S."/>
            <person name="Schroeter R."/>
            <person name="Scoffone F."/>
            <person name="Sekiguchi J."/>
            <person name="Sekowska A."/>
            <person name="Seror S.J."/>
            <person name="Serror P."/>
            <person name="Shin B.-S."/>
            <person name="Soldo B."/>
            <person name="Sorokin A."/>
            <person name="Tacconi E."/>
            <person name="Takagi T."/>
            <person name="Takahashi H."/>
            <person name="Takemaru K."/>
            <person name="Takeuchi M."/>
            <person name="Tamakoshi A."/>
            <person name="Tanaka T."/>
            <person name="Terpstra P."/>
            <person name="Tognoni A."/>
            <person name="Tosato V."/>
            <person name="Uchiyama S."/>
            <person name="Vandenbol M."/>
            <person name="Vannier F."/>
            <person name="Vassarotti A."/>
            <person name="Viari A."/>
            <person name="Wambutt R."/>
            <person name="Wedler E."/>
            <person name="Wedler H."/>
            <person name="Weitzenegger T."/>
            <person name="Winters P."/>
            <person name="Wipat A."/>
            <person name="Yamamoto H."/>
            <person name="Yamane K."/>
            <person name="Yasumoto K."/>
            <person name="Yata K."/>
            <person name="Yoshida K."/>
            <person name="Yoshikawa H.-F."/>
            <person name="Zumstein E."/>
            <person name="Yoshikawa H."/>
            <person name="Danchin A."/>
        </authorList>
    </citation>
    <scope>NUCLEOTIDE SEQUENCE [LARGE SCALE GENOMIC DNA]</scope>
    <source>
        <strain>168</strain>
    </source>
</reference>
<reference key="4">
    <citation type="journal article" date="2000" name="J. Bacteriol.">
        <title>Catabolite repression and induction of the Mg(2+)-citrate transporter CitM of Bacillus subtilis.</title>
        <authorList>
            <person name="Warner J.B."/>
            <person name="Krom B.P."/>
            <person name="Magni C."/>
            <person name="Konings W.N."/>
            <person name="Lolkema J.S."/>
        </authorList>
    </citation>
    <scope>TRANSCRIPTIONAL REGULATION</scope>
    <source>
        <strain>168</strain>
    </source>
</reference>
<reference key="5">
    <citation type="journal article" date="2000" name="Mol. Microbiol.">
        <title>The CitST two-component system regulates the expression of the Mg-citrate transporter in Bacillus subtilis.</title>
        <authorList>
            <person name="Yamamoto H."/>
            <person name="Murata M."/>
            <person name="Sekiguchi J."/>
        </authorList>
    </citation>
    <scope>TRANSCRIPTIONAL REGULATION</scope>
    <source>
        <strain>168</strain>
    </source>
</reference>
<reference key="6">
    <citation type="journal article" date="2000" name="J. Bacteriol.">
        <title>Complementary metal ion specificity of the metal-citrate transporters CitM and CitH of Bacillus subtilis.</title>
        <authorList>
            <person name="Krom B.P."/>
            <person name="Warner J.B."/>
            <person name="Konings W.N."/>
            <person name="Lolkema J.S."/>
        </authorList>
    </citation>
    <scope>CHARACTERIZATION</scope>
    <source>
        <strain>168</strain>
    </source>
</reference>
<reference key="7">
    <citation type="journal article" date="2002" name="J. Membr. Biol.">
        <title>Functional characterization of CitM, the Mg2+-citrate transporter.</title>
        <authorList>
            <person name="Li H."/>
            <person name="Pajor A.M."/>
        </authorList>
    </citation>
    <scope>CHARACTERIZATION</scope>
    <source>
        <strain>168</strain>
    </source>
</reference>
<protein>
    <recommendedName>
        <fullName>Mg(2+)/citrate complex secondary transporter</fullName>
    </recommendedName>
</protein>
<sequence>MLAILGFLMMLVFMALIMTKRLSVLTALVLTPIVFALIAGFGFTEVGDMMISGIQQVAPTAVMIMFAILYFGIMIDTGLFDPMVGKILSMVKGDPLKIVVGTAVLTMLVALDGDGSTTYMITTSAMLPLYLLLGIRPIILAGIAGVGMGIMNTIPWGGATPRAASALGVDPAELTGPMIPVIASGMLCMVAVAYVLGKAERKRLGVIELKQPANANEPAAAVEDEWKRPKLWWFNLLLTLSLIGCLVSGKVSLTVLFVIAFCIALIVNYPNLEHQRQRIAAHSSNVLAIGSMIFAAGVFTGILTGTKMVDEMAISLVSMIPEQMGGLIPAIVALTSGIFTFLMPNDAYFYGVLPILSETAVAYGVDKVEIARASIIGQPIHMLSPLVPSTHLLVGLVGVSIDDHQKFALKWAVLAVIVMTAIALLIGAISISV</sequence>
<evidence type="ECO:0000255" key="1"/>
<evidence type="ECO:0000269" key="2">
    <source>
    </source>
</evidence>
<evidence type="ECO:0000269" key="3">
    <source>
    </source>
</evidence>
<evidence type="ECO:0000305" key="4"/>
<organism>
    <name type="scientific">Bacillus subtilis (strain 168)</name>
    <dbReference type="NCBI Taxonomy" id="224308"/>
    <lineage>
        <taxon>Bacteria</taxon>
        <taxon>Bacillati</taxon>
        <taxon>Bacillota</taxon>
        <taxon>Bacilli</taxon>
        <taxon>Bacillales</taxon>
        <taxon>Bacillaceae</taxon>
        <taxon>Bacillus</taxon>
    </lineage>
</organism>
<comment type="function">
    <text>Proton motive force-driven secondary transporter that mediates the transport of citrate complexed to Mg(2+). Cotransports at least two protons per Mg(2+)-citrate complex. Can also transport citrate in complex with Ni(2+), Mn(2+), Co(2+), and Zn(2+).</text>
</comment>
<comment type="activity regulation">
    <text>The uptake activity increases with increasing Mg(2+) concentrations. Inhibited by FCCP, TCC and nigericin.</text>
</comment>
<comment type="subcellular location">
    <subcellularLocation>
        <location evidence="4">Cell membrane</location>
        <topology evidence="4">Multi-pass membrane protein</topology>
    </subcellularLocation>
</comment>
<comment type="induction">
    <text evidence="2 3">Expression is under strict control of the medium composition. Induced by citrate, via the two-component regulatory system CitT/CitS. Repressed by rapidly metabolized carbon sources like glucose, glycerol and inositol, via the carbon catabolite repression system. Is also repressed by succinate and glutamate, albeit to a lesser extent.</text>
</comment>
<comment type="similarity">
    <text evidence="4">Belongs to the CitM (TC 2.A.11) transporter family.</text>
</comment>
<comment type="sequence caution" evidence="4">
    <conflict type="erroneous initiation">
        <sequence resource="EMBL-CDS" id="BAA22308"/>
    </conflict>
</comment>
<name>CITM_BACSU</name>
<accession>P55069</accession>
<proteinExistence type="evidence at protein level"/>
<dbReference type="EMBL" id="U62003">
    <property type="protein sequence ID" value="AAC44564.1"/>
    <property type="molecule type" value="Genomic_DNA"/>
</dbReference>
<dbReference type="EMBL" id="D86417">
    <property type="protein sequence ID" value="BAA22308.1"/>
    <property type="status" value="ALT_INIT"/>
    <property type="molecule type" value="Genomic_DNA"/>
</dbReference>
<dbReference type="EMBL" id="AL009126">
    <property type="protein sequence ID" value="CAB12590.1"/>
    <property type="molecule type" value="Genomic_DNA"/>
</dbReference>
<dbReference type="PIR" id="C69600">
    <property type="entry name" value="C69600"/>
</dbReference>
<dbReference type="RefSeq" id="NP_388642.1">
    <property type="nucleotide sequence ID" value="NC_000964.3"/>
</dbReference>
<dbReference type="RefSeq" id="WP_003242978.1">
    <property type="nucleotide sequence ID" value="NZ_OZ025638.1"/>
</dbReference>
<dbReference type="SMR" id="P55069"/>
<dbReference type="FunCoup" id="P55069">
    <property type="interactions" value="224"/>
</dbReference>
<dbReference type="STRING" id="224308.BSU07610"/>
<dbReference type="TCDB" id="2.A.11.1.1">
    <property type="family name" value="the citrate-mg(2+):h(+) (citm) citrate-ca(2+):h(+) (cith) symporter (citmhs) family"/>
</dbReference>
<dbReference type="PaxDb" id="224308-BSU07610"/>
<dbReference type="EnsemblBacteria" id="CAB12590">
    <property type="protein sequence ID" value="CAB12590"/>
    <property type="gene ID" value="BSU_07610"/>
</dbReference>
<dbReference type="GeneID" id="11238654"/>
<dbReference type="GeneID" id="938801"/>
<dbReference type="KEGG" id="bsu:BSU07610"/>
<dbReference type="PATRIC" id="fig|224308.179.peg.827"/>
<dbReference type="eggNOG" id="COG2851">
    <property type="taxonomic scope" value="Bacteria"/>
</dbReference>
<dbReference type="InParanoid" id="P55069"/>
<dbReference type="OrthoDB" id="5329450at2"/>
<dbReference type="PhylomeDB" id="P55069"/>
<dbReference type="BioCyc" id="BSUB:BSU07610-MONOMER"/>
<dbReference type="PRO" id="PR:P55069"/>
<dbReference type="Proteomes" id="UP000001570">
    <property type="component" value="Chromosome"/>
</dbReference>
<dbReference type="GO" id="GO:0005886">
    <property type="term" value="C:plasma membrane"/>
    <property type="evidence" value="ECO:0000318"/>
    <property type="project" value="GO_Central"/>
</dbReference>
<dbReference type="GO" id="GO:0015137">
    <property type="term" value="F:citrate transmembrane transporter activity"/>
    <property type="evidence" value="ECO:0007669"/>
    <property type="project" value="InterPro"/>
</dbReference>
<dbReference type="GO" id="GO:0015293">
    <property type="term" value="F:symporter activity"/>
    <property type="evidence" value="ECO:0007669"/>
    <property type="project" value="UniProtKB-KW"/>
</dbReference>
<dbReference type="GO" id="GO:0022857">
    <property type="term" value="F:transmembrane transporter activity"/>
    <property type="evidence" value="ECO:0000318"/>
    <property type="project" value="GO_Central"/>
</dbReference>
<dbReference type="GO" id="GO:0006101">
    <property type="term" value="P:citrate metabolic process"/>
    <property type="evidence" value="ECO:0007669"/>
    <property type="project" value="UniProtKB-KW"/>
</dbReference>
<dbReference type="GO" id="GO:0055085">
    <property type="term" value="P:transmembrane transport"/>
    <property type="evidence" value="ECO:0000318"/>
    <property type="project" value="GO_Central"/>
</dbReference>
<dbReference type="InterPro" id="IPR004680">
    <property type="entry name" value="Cit_transptr-like_dom"/>
</dbReference>
<dbReference type="InterPro" id="IPR014738">
    <property type="entry name" value="Citrate_transporter"/>
</dbReference>
<dbReference type="NCBIfam" id="TIGR00784">
    <property type="entry name" value="citMHS"/>
    <property type="match status" value="1"/>
</dbReference>
<dbReference type="Pfam" id="PF03600">
    <property type="entry name" value="CitMHS"/>
    <property type="match status" value="1"/>
</dbReference>
<gene>
    <name type="primary">citM</name>
    <name type="synonym">yflO</name>
    <name type="ordered locus">BSU07610</name>
</gene>
<keyword id="KW-1003">Cell membrane</keyword>
<keyword id="KW-0163">Citrate utilization</keyword>
<keyword id="KW-0472">Membrane</keyword>
<keyword id="KW-1185">Reference proteome</keyword>
<keyword id="KW-0769">Symport</keyword>
<keyword id="KW-0812">Transmembrane</keyword>
<keyword id="KW-1133">Transmembrane helix</keyword>
<keyword id="KW-0813">Transport</keyword>
<feature type="chain" id="PRO_0000089774" description="Mg(2+)/citrate complex secondary transporter">
    <location>
        <begin position="1"/>
        <end position="433"/>
    </location>
</feature>
<feature type="transmembrane region" description="Helical" evidence="1">
    <location>
        <begin position="2"/>
        <end position="22"/>
    </location>
</feature>
<feature type="transmembrane region" description="Helical" evidence="1">
    <location>
        <begin position="24"/>
        <end position="44"/>
    </location>
</feature>
<feature type="transmembrane region" description="Helical" evidence="1">
    <location>
        <begin position="60"/>
        <end position="80"/>
    </location>
</feature>
<feature type="transmembrane region" description="Helical" evidence="1">
    <location>
        <begin position="98"/>
        <end position="118"/>
    </location>
</feature>
<feature type="transmembrane region" description="Helical" evidence="1">
    <location>
        <begin position="131"/>
        <end position="151"/>
    </location>
</feature>
<feature type="transmembrane region" description="Helical" evidence="1">
    <location>
        <begin position="176"/>
        <end position="196"/>
    </location>
</feature>
<feature type="transmembrane region" description="Helical" evidence="1">
    <location>
        <begin position="247"/>
        <end position="267"/>
    </location>
</feature>
<feature type="transmembrane region" description="Helical" evidence="1">
    <location>
        <begin position="286"/>
        <end position="306"/>
    </location>
</feature>
<feature type="transmembrane region" description="Helical" evidence="1">
    <location>
        <begin position="324"/>
        <end position="344"/>
    </location>
</feature>
<feature type="transmembrane region" description="Helical" evidence="1">
    <location>
        <begin position="345"/>
        <end position="365"/>
    </location>
</feature>
<feature type="transmembrane region" description="Helical" evidence="1">
    <location>
        <begin position="379"/>
        <end position="399"/>
    </location>
</feature>
<feature type="transmembrane region" description="Helical" evidence="1">
    <location>
        <begin position="411"/>
        <end position="431"/>
    </location>
</feature>